<organism>
    <name type="scientific">Streptococcus uberis (strain ATCC BAA-854 / 0140J)</name>
    <dbReference type="NCBI Taxonomy" id="218495"/>
    <lineage>
        <taxon>Bacteria</taxon>
        <taxon>Bacillati</taxon>
        <taxon>Bacillota</taxon>
        <taxon>Bacilli</taxon>
        <taxon>Lactobacillales</taxon>
        <taxon>Streptococcaceae</taxon>
        <taxon>Streptococcus</taxon>
    </lineage>
</organism>
<gene>
    <name evidence="1" type="primary">clpX</name>
    <name type="ordered locus">SUB0773</name>
</gene>
<accession>B9DU73</accession>
<dbReference type="EMBL" id="AM946015">
    <property type="protein sequence ID" value="CAR41754.1"/>
    <property type="molecule type" value="Genomic_DNA"/>
</dbReference>
<dbReference type="RefSeq" id="WP_012658290.1">
    <property type="nucleotide sequence ID" value="NC_012004.1"/>
</dbReference>
<dbReference type="SMR" id="B9DU73"/>
<dbReference type="STRING" id="218495.SUB0773"/>
<dbReference type="GeneID" id="93826057"/>
<dbReference type="KEGG" id="sub:SUB0773"/>
<dbReference type="eggNOG" id="COG1219">
    <property type="taxonomic scope" value="Bacteria"/>
</dbReference>
<dbReference type="HOGENOM" id="CLU_014218_8_2_9"/>
<dbReference type="OrthoDB" id="9804062at2"/>
<dbReference type="Proteomes" id="UP000000449">
    <property type="component" value="Chromosome"/>
</dbReference>
<dbReference type="GO" id="GO:0009376">
    <property type="term" value="C:HslUV protease complex"/>
    <property type="evidence" value="ECO:0007669"/>
    <property type="project" value="TreeGrafter"/>
</dbReference>
<dbReference type="GO" id="GO:0005524">
    <property type="term" value="F:ATP binding"/>
    <property type="evidence" value="ECO:0007669"/>
    <property type="project" value="UniProtKB-UniRule"/>
</dbReference>
<dbReference type="GO" id="GO:0016887">
    <property type="term" value="F:ATP hydrolysis activity"/>
    <property type="evidence" value="ECO:0007669"/>
    <property type="project" value="InterPro"/>
</dbReference>
<dbReference type="GO" id="GO:0140662">
    <property type="term" value="F:ATP-dependent protein folding chaperone"/>
    <property type="evidence" value="ECO:0007669"/>
    <property type="project" value="InterPro"/>
</dbReference>
<dbReference type="GO" id="GO:0046983">
    <property type="term" value="F:protein dimerization activity"/>
    <property type="evidence" value="ECO:0007669"/>
    <property type="project" value="InterPro"/>
</dbReference>
<dbReference type="GO" id="GO:0051082">
    <property type="term" value="F:unfolded protein binding"/>
    <property type="evidence" value="ECO:0007669"/>
    <property type="project" value="UniProtKB-UniRule"/>
</dbReference>
<dbReference type="GO" id="GO:0008270">
    <property type="term" value="F:zinc ion binding"/>
    <property type="evidence" value="ECO:0007669"/>
    <property type="project" value="InterPro"/>
</dbReference>
<dbReference type="GO" id="GO:0051301">
    <property type="term" value="P:cell division"/>
    <property type="evidence" value="ECO:0007669"/>
    <property type="project" value="TreeGrafter"/>
</dbReference>
<dbReference type="GO" id="GO:0051603">
    <property type="term" value="P:proteolysis involved in protein catabolic process"/>
    <property type="evidence" value="ECO:0007669"/>
    <property type="project" value="TreeGrafter"/>
</dbReference>
<dbReference type="CDD" id="cd19497">
    <property type="entry name" value="RecA-like_ClpX"/>
    <property type="match status" value="1"/>
</dbReference>
<dbReference type="FunFam" id="1.10.8.60:FF:000002">
    <property type="entry name" value="ATP-dependent Clp protease ATP-binding subunit ClpX"/>
    <property type="match status" value="1"/>
</dbReference>
<dbReference type="FunFam" id="3.40.50.300:FF:000005">
    <property type="entry name" value="ATP-dependent Clp protease ATP-binding subunit ClpX"/>
    <property type="match status" value="1"/>
</dbReference>
<dbReference type="Gene3D" id="1.10.8.60">
    <property type="match status" value="1"/>
</dbReference>
<dbReference type="Gene3D" id="6.20.220.10">
    <property type="entry name" value="ClpX chaperone, C4-type zinc finger domain"/>
    <property type="match status" value="1"/>
</dbReference>
<dbReference type="Gene3D" id="3.40.50.300">
    <property type="entry name" value="P-loop containing nucleotide triphosphate hydrolases"/>
    <property type="match status" value="1"/>
</dbReference>
<dbReference type="HAMAP" id="MF_00175">
    <property type="entry name" value="ClpX"/>
    <property type="match status" value="1"/>
</dbReference>
<dbReference type="InterPro" id="IPR003593">
    <property type="entry name" value="AAA+_ATPase"/>
</dbReference>
<dbReference type="InterPro" id="IPR050052">
    <property type="entry name" value="ATP-dep_Clp_protease_ClpX"/>
</dbReference>
<dbReference type="InterPro" id="IPR003959">
    <property type="entry name" value="ATPase_AAA_core"/>
</dbReference>
<dbReference type="InterPro" id="IPR019489">
    <property type="entry name" value="Clp_ATPase_C"/>
</dbReference>
<dbReference type="InterPro" id="IPR004487">
    <property type="entry name" value="Clp_protease_ATP-bd_su_ClpX"/>
</dbReference>
<dbReference type="InterPro" id="IPR046425">
    <property type="entry name" value="ClpX_bact"/>
</dbReference>
<dbReference type="InterPro" id="IPR027417">
    <property type="entry name" value="P-loop_NTPase"/>
</dbReference>
<dbReference type="InterPro" id="IPR010603">
    <property type="entry name" value="Znf_CppX_C4"/>
</dbReference>
<dbReference type="InterPro" id="IPR038366">
    <property type="entry name" value="Znf_CppX_C4_sf"/>
</dbReference>
<dbReference type="NCBIfam" id="TIGR00382">
    <property type="entry name" value="clpX"/>
    <property type="match status" value="1"/>
</dbReference>
<dbReference type="NCBIfam" id="NF003745">
    <property type="entry name" value="PRK05342.1"/>
    <property type="match status" value="1"/>
</dbReference>
<dbReference type="PANTHER" id="PTHR48102:SF7">
    <property type="entry name" value="ATP-DEPENDENT CLP PROTEASE ATP-BINDING SUBUNIT CLPX-LIKE, MITOCHONDRIAL"/>
    <property type="match status" value="1"/>
</dbReference>
<dbReference type="PANTHER" id="PTHR48102">
    <property type="entry name" value="ATP-DEPENDENT CLP PROTEASE ATP-BINDING SUBUNIT CLPX-LIKE, MITOCHONDRIAL-RELATED"/>
    <property type="match status" value="1"/>
</dbReference>
<dbReference type="Pfam" id="PF07724">
    <property type="entry name" value="AAA_2"/>
    <property type="match status" value="1"/>
</dbReference>
<dbReference type="Pfam" id="PF10431">
    <property type="entry name" value="ClpB_D2-small"/>
    <property type="match status" value="1"/>
</dbReference>
<dbReference type="Pfam" id="PF06689">
    <property type="entry name" value="zf-C4_ClpX"/>
    <property type="match status" value="1"/>
</dbReference>
<dbReference type="SMART" id="SM00382">
    <property type="entry name" value="AAA"/>
    <property type="match status" value="1"/>
</dbReference>
<dbReference type="SMART" id="SM01086">
    <property type="entry name" value="ClpB_D2-small"/>
    <property type="match status" value="1"/>
</dbReference>
<dbReference type="SMART" id="SM00994">
    <property type="entry name" value="zf-C4_ClpX"/>
    <property type="match status" value="1"/>
</dbReference>
<dbReference type="SUPFAM" id="SSF57716">
    <property type="entry name" value="Glucocorticoid receptor-like (DNA-binding domain)"/>
    <property type="match status" value="1"/>
</dbReference>
<dbReference type="SUPFAM" id="SSF52540">
    <property type="entry name" value="P-loop containing nucleoside triphosphate hydrolases"/>
    <property type="match status" value="1"/>
</dbReference>
<dbReference type="PROSITE" id="PS51902">
    <property type="entry name" value="CLPX_ZB"/>
    <property type="match status" value="1"/>
</dbReference>
<keyword id="KW-0067">ATP-binding</keyword>
<keyword id="KW-0143">Chaperone</keyword>
<keyword id="KW-0479">Metal-binding</keyword>
<keyword id="KW-0547">Nucleotide-binding</keyword>
<keyword id="KW-1185">Reference proteome</keyword>
<keyword id="KW-0862">Zinc</keyword>
<evidence type="ECO:0000255" key="1">
    <source>
        <dbReference type="HAMAP-Rule" id="MF_00175"/>
    </source>
</evidence>
<evidence type="ECO:0000255" key="2">
    <source>
        <dbReference type="PROSITE-ProRule" id="PRU01250"/>
    </source>
</evidence>
<reference key="1">
    <citation type="journal article" date="2009" name="BMC Genomics">
        <title>Evidence for niche adaptation in the genome of the bovine pathogen Streptococcus uberis.</title>
        <authorList>
            <person name="Ward P.N."/>
            <person name="Holden M.T.G."/>
            <person name="Leigh J.A."/>
            <person name="Lennard N."/>
            <person name="Bignell A."/>
            <person name="Barron A."/>
            <person name="Clark L."/>
            <person name="Quail M.A."/>
            <person name="Woodward J."/>
            <person name="Barrell B.G."/>
            <person name="Egan S.A."/>
            <person name="Field T.R."/>
            <person name="Maskell D."/>
            <person name="Kehoe M."/>
            <person name="Dowson C.G."/>
            <person name="Chanter N."/>
            <person name="Whatmore A.M."/>
            <person name="Bentley S.D."/>
            <person name="Parkhill J."/>
        </authorList>
    </citation>
    <scope>NUCLEOTIDE SEQUENCE [LARGE SCALE GENOMIC DNA]</scope>
    <source>
        <strain>ATCC BAA-854 / 0140J</strain>
    </source>
</reference>
<comment type="function">
    <text evidence="1">ATP-dependent specificity component of the Clp protease. It directs the protease to specific substrates. Can perform chaperone functions in the absence of ClpP.</text>
</comment>
<comment type="subunit">
    <text evidence="1">Component of the ClpX-ClpP complex. Forms a hexameric ring that, in the presence of ATP, binds to fourteen ClpP subunits assembled into a disk-like structure with a central cavity, resembling the structure of eukaryotic proteasomes.</text>
</comment>
<comment type="similarity">
    <text evidence="1">Belongs to the ClpX chaperone family.</text>
</comment>
<protein>
    <recommendedName>
        <fullName evidence="1">ATP-dependent Clp protease ATP-binding subunit ClpX</fullName>
    </recommendedName>
</protein>
<name>CLPX_STRU0</name>
<proteinExistence type="inferred from homology"/>
<sequence>MAGNRSTDIKVHCSFCGKSQDEVKKIIAGNNVFICNECVLLSQEIIKEELAEEVLADLTEVPKPKELLDVLNQYVVGQDRAKRALAVAVYNHYKRISFSESRDEEEVELQKSNILMIGPTGSGKTFLAQTLAKSLNVPFAIADATSLTEAGYVGEDVENILLKLIQAADYNVERAERGIIYVDEIDKIAKKGENVSITRDVSGEGVQQALLKIIEGTVASVPPQGGRKHPNQEMIQIDTKNILFIVGGAFDGIEEIVKQRLGEKIIGFGQNSRKIDEDASYMQEIISDDIQKFGLIPEFIGRLPVVAALEQLNIDDLIQILTVPKNALVKQYQALLSYDGVELSFDQDALEAIAAKAIERKTGARGLRSIIEETMLDIMFEIPSQEDVVKVRITKESVNGDAKPILETA</sequence>
<feature type="chain" id="PRO_1000123854" description="ATP-dependent Clp protease ATP-binding subunit ClpX">
    <location>
        <begin position="1"/>
        <end position="409"/>
    </location>
</feature>
<feature type="domain" description="ClpX-type ZB" evidence="2">
    <location>
        <begin position="1"/>
        <end position="54"/>
    </location>
</feature>
<feature type="binding site" evidence="2">
    <location>
        <position position="13"/>
    </location>
    <ligand>
        <name>Zn(2+)</name>
        <dbReference type="ChEBI" id="CHEBI:29105"/>
    </ligand>
</feature>
<feature type="binding site" evidence="2">
    <location>
        <position position="16"/>
    </location>
    <ligand>
        <name>Zn(2+)</name>
        <dbReference type="ChEBI" id="CHEBI:29105"/>
    </ligand>
</feature>
<feature type="binding site" evidence="2">
    <location>
        <position position="35"/>
    </location>
    <ligand>
        <name>Zn(2+)</name>
        <dbReference type="ChEBI" id="CHEBI:29105"/>
    </ligand>
</feature>
<feature type="binding site" evidence="2">
    <location>
        <position position="38"/>
    </location>
    <ligand>
        <name>Zn(2+)</name>
        <dbReference type="ChEBI" id="CHEBI:29105"/>
    </ligand>
</feature>
<feature type="binding site" evidence="1">
    <location>
        <begin position="119"/>
        <end position="126"/>
    </location>
    <ligand>
        <name>ATP</name>
        <dbReference type="ChEBI" id="CHEBI:30616"/>
    </ligand>
</feature>